<organism>
    <name type="scientific">Cupriavidus necator (strain ATCC 17699 / DSM 428 / KCTC 22496 / NCIMB 10442 / H16 / Stanier 337)</name>
    <name type="common">Ralstonia eutropha</name>
    <dbReference type="NCBI Taxonomy" id="381666"/>
    <lineage>
        <taxon>Bacteria</taxon>
        <taxon>Pseudomonadati</taxon>
        <taxon>Pseudomonadota</taxon>
        <taxon>Betaproteobacteria</taxon>
        <taxon>Burkholderiales</taxon>
        <taxon>Burkholderiaceae</taxon>
        <taxon>Cupriavidus</taxon>
    </lineage>
</organism>
<evidence type="ECO:0000255" key="1">
    <source>
        <dbReference type="HAMAP-Rule" id="MF_01962"/>
    </source>
</evidence>
<reference key="1">
    <citation type="journal article" date="2006" name="Nat. Biotechnol.">
        <title>Genome sequence of the bioplastic-producing 'Knallgas' bacterium Ralstonia eutropha H16.</title>
        <authorList>
            <person name="Pohlmann A."/>
            <person name="Fricke W.F."/>
            <person name="Reinecke F."/>
            <person name="Kusian B."/>
            <person name="Liesegang H."/>
            <person name="Cramm R."/>
            <person name="Eitinger T."/>
            <person name="Ewering C."/>
            <person name="Poetter M."/>
            <person name="Schwartz E."/>
            <person name="Strittmatter A."/>
            <person name="Voss I."/>
            <person name="Gottschalk G."/>
            <person name="Steinbuechel A."/>
            <person name="Friedrich B."/>
            <person name="Bowien B."/>
        </authorList>
    </citation>
    <scope>NUCLEOTIDE SEQUENCE [LARGE SCALE GENOMIC DNA]</scope>
    <source>
        <strain>ATCC 17699 / DSM 428 / KCTC 22496 / NCIMB 10442 / H16 / Stanier 337</strain>
    </source>
</reference>
<name>ADE_CUPNH</name>
<gene>
    <name type="ordered locus">H16_A1014</name>
</gene>
<proteinExistence type="inferred from homology"/>
<comment type="function">
    <text evidence="1">Catalyzes the hydrolytic deamination of adenine to hypoxanthine. Plays an important role in the purine salvage pathway and in nitrogen catabolism.</text>
</comment>
<comment type="catalytic activity">
    <reaction evidence="1">
        <text>adenine + H2O + H(+) = hypoxanthine + NH4(+)</text>
        <dbReference type="Rhea" id="RHEA:23688"/>
        <dbReference type="ChEBI" id="CHEBI:15377"/>
        <dbReference type="ChEBI" id="CHEBI:15378"/>
        <dbReference type="ChEBI" id="CHEBI:16708"/>
        <dbReference type="ChEBI" id="CHEBI:17368"/>
        <dbReference type="ChEBI" id="CHEBI:28938"/>
        <dbReference type="EC" id="3.5.4.2"/>
    </reaction>
</comment>
<comment type="cofactor">
    <cofactor evidence="1">
        <name>Zn(2+)</name>
        <dbReference type="ChEBI" id="CHEBI:29105"/>
    </cofactor>
    <text evidence="1">Binds 1 zinc ion per subunit.</text>
</comment>
<comment type="similarity">
    <text evidence="1">Belongs to the metallo-dependent hydrolases superfamily. Adenosine and AMP deaminases family. Adenine deaminase type 2 subfamily.</text>
</comment>
<feature type="chain" id="PRO_1000017687" description="Adenine deaminase">
    <location>
        <begin position="1"/>
        <end position="351"/>
    </location>
</feature>
<feature type="active site" description="Proton donor" evidence="1">
    <location>
        <position position="203"/>
    </location>
</feature>
<feature type="binding site" evidence="1">
    <location>
        <position position="20"/>
    </location>
    <ligand>
        <name>Zn(2+)</name>
        <dbReference type="ChEBI" id="CHEBI:29105"/>
        <note>catalytic</note>
    </ligand>
</feature>
<feature type="binding site" evidence="1">
    <location>
        <position position="22"/>
    </location>
    <ligand>
        <name>Zn(2+)</name>
        <dbReference type="ChEBI" id="CHEBI:29105"/>
        <note>catalytic</note>
    </ligand>
</feature>
<feature type="binding site" evidence="1">
    <location>
        <position position="200"/>
    </location>
    <ligand>
        <name>Zn(2+)</name>
        <dbReference type="ChEBI" id="CHEBI:29105"/>
        <note>catalytic</note>
    </ligand>
</feature>
<feature type="binding site" evidence="1">
    <location>
        <position position="281"/>
    </location>
    <ligand>
        <name>Zn(2+)</name>
        <dbReference type="ChEBI" id="CHEBI:29105"/>
        <note>catalytic</note>
    </ligand>
</feature>
<feature type="binding site" evidence="1">
    <location>
        <position position="282"/>
    </location>
    <ligand>
        <name>substrate</name>
    </ligand>
</feature>
<feature type="site" description="Important for catalytic activity" evidence="1">
    <location>
        <position position="224"/>
    </location>
</feature>
<sequence length="351" mass="38865">MTIDAALAEQIRRTPKAELHVHIEGTLEPELIFRLAQRNQVALPYPSVEALRAAYAFTDLQSFLDIYYAGASVLLTEEDFFDMTMDYVKRAVADNVRHAEIFFDPQTHTARGVPIGVVIDGIADALAQARTEYDFSSSLILCFLRHLPEEDAFATLEAALPYRDRFVGVGLDSSERGNPPEKFARVFARARELGLHLVAHAGEEGPAQYVTDALDILKAQRIDHGVRAIDDPALVERLARERVALTVCPLSNVKLKVYPDLRDHPLKRMLDAGVVITLHSDDPAYFGGYMNANWEATFEALPLDAADAHKLARNSFEAAFLPAMQKAEFLAEVDHFWSSPPKSPPATAPAA</sequence>
<protein>
    <recommendedName>
        <fullName evidence="1">Adenine deaminase</fullName>
        <shortName evidence="1">ADE</shortName>
        <ecNumber evidence="1">3.5.4.2</ecNumber>
    </recommendedName>
    <alternativeName>
        <fullName evidence="1">Adenine aminohydrolase</fullName>
        <shortName evidence="1">AAH</shortName>
    </alternativeName>
</protein>
<keyword id="KW-0378">Hydrolase</keyword>
<keyword id="KW-0479">Metal-binding</keyword>
<keyword id="KW-0546">Nucleotide metabolism</keyword>
<keyword id="KW-1185">Reference proteome</keyword>
<keyword id="KW-0862">Zinc</keyword>
<accession>Q0KCW5</accession>
<dbReference type="EC" id="3.5.4.2" evidence="1"/>
<dbReference type="EMBL" id="AM260479">
    <property type="protein sequence ID" value="CAJ92156.1"/>
    <property type="molecule type" value="Genomic_DNA"/>
</dbReference>
<dbReference type="RefSeq" id="WP_010809166.1">
    <property type="nucleotide sequence ID" value="NZ_CP039287.1"/>
</dbReference>
<dbReference type="SMR" id="Q0KCW5"/>
<dbReference type="STRING" id="381666.H16_A1014"/>
<dbReference type="KEGG" id="reh:H16_A1014"/>
<dbReference type="eggNOG" id="COG1816">
    <property type="taxonomic scope" value="Bacteria"/>
</dbReference>
<dbReference type="HOGENOM" id="CLU_039228_7_0_4"/>
<dbReference type="OrthoDB" id="105475at2"/>
<dbReference type="Proteomes" id="UP000008210">
    <property type="component" value="Chromosome 1"/>
</dbReference>
<dbReference type="GO" id="GO:0005829">
    <property type="term" value="C:cytosol"/>
    <property type="evidence" value="ECO:0007669"/>
    <property type="project" value="TreeGrafter"/>
</dbReference>
<dbReference type="GO" id="GO:0000034">
    <property type="term" value="F:adenine deaminase activity"/>
    <property type="evidence" value="ECO:0007669"/>
    <property type="project" value="UniProtKB-UniRule"/>
</dbReference>
<dbReference type="GO" id="GO:0008270">
    <property type="term" value="F:zinc ion binding"/>
    <property type="evidence" value="ECO:0007669"/>
    <property type="project" value="UniProtKB-UniRule"/>
</dbReference>
<dbReference type="GO" id="GO:0006146">
    <property type="term" value="P:adenine catabolic process"/>
    <property type="evidence" value="ECO:0007669"/>
    <property type="project" value="UniProtKB-UniRule"/>
</dbReference>
<dbReference type="GO" id="GO:0043103">
    <property type="term" value="P:hypoxanthine salvage"/>
    <property type="evidence" value="ECO:0007669"/>
    <property type="project" value="UniProtKB-UniRule"/>
</dbReference>
<dbReference type="GO" id="GO:0009117">
    <property type="term" value="P:nucleotide metabolic process"/>
    <property type="evidence" value="ECO:0007669"/>
    <property type="project" value="UniProtKB-KW"/>
</dbReference>
<dbReference type="CDD" id="cd01320">
    <property type="entry name" value="ADA"/>
    <property type="match status" value="1"/>
</dbReference>
<dbReference type="FunFam" id="3.20.20.140:FF:000039">
    <property type="entry name" value="Adenine deaminase"/>
    <property type="match status" value="1"/>
</dbReference>
<dbReference type="Gene3D" id="3.20.20.140">
    <property type="entry name" value="Metal-dependent hydrolases"/>
    <property type="match status" value="1"/>
</dbReference>
<dbReference type="HAMAP" id="MF_01962">
    <property type="entry name" value="Adenine_deaminase"/>
    <property type="match status" value="1"/>
</dbReference>
<dbReference type="InterPro" id="IPR001365">
    <property type="entry name" value="A_deaminase_dom"/>
</dbReference>
<dbReference type="InterPro" id="IPR028892">
    <property type="entry name" value="ADE"/>
</dbReference>
<dbReference type="InterPro" id="IPR006330">
    <property type="entry name" value="Ado/ade_deaminase"/>
</dbReference>
<dbReference type="InterPro" id="IPR032466">
    <property type="entry name" value="Metal_Hydrolase"/>
</dbReference>
<dbReference type="NCBIfam" id="TIGR01430">
    <property type="entry name" value="aden_deam"/>
    <property type="match status" value="1"/>
</dbReference>
<dbReference type="NCBIfam" id="NF006850">
    <property type="entry name" value="PRK09358.1-6"/>
    <property type="match status" value="1"/>
</dbReference>
<dbReference type="PANTHER" id="PTHR43114">
    <property type="entry name" value="ADENINE DEAMINASE"/>
    <property type="match status" value="1"/>
</dbReference>
<dbReference type="PANTHER" id="PTHR43114:SF6">
    <property type="entry name" value="ADENINE DEAMINASE"/>
    <property type="match status" value="1"/>
</dbReference>
<dbReference type="Pfam" id="PF00962">
    <property type="entry name" value="A_deaminase"/>
    <property type="match status" value="1"/>
</dbReference>
<dbReference type="SUPFAM" id="SSF51556">
    <property type="entry name" value="Metallo-dependent hydrolases"/>
    <property type="match status" value="1"/>
</dbReference>